<evidence type="ECO:0000255" key="1">
    <source>
        <dbReference type="HAMAP-Rule" id="MF_00099"/>
    </source>
</evidence>
<organism>
    <name type="scientific">Nitrosospira multiformis (strain ATCC 25196 / NCIMB 11849 / C 71)</name>
    <dbReference type="NCBI Taxonomy" id="323848"/>
    <lineage>
        <taxon>Bacteria</taxon>
        <taxon>Pseudomonadati</taxon>
        <taxon>Pseudomonadota</taxon>
        <taxon>Betaproteobacteria</taxon>
        <taxon>Nitrosomonadales</taxon>
        <taxon>Nitrosomonadaceae</taxon>
        <taxon>Nitrosospira</taxon>
    </lineage>
</organism>
<name>CHEB_NITMU</name>
<keyword id="KW-0145">Chemotaxis</keyword>
<keyword id="KW-0963">Cytoplasm</keyword>
<keyword id="KW-0378">Hydrolase</keyword>
<keyword id="KW-0597">Phosphoprotein</keyword>
<keyword id="KW-1185">Reference proteome</keyword>
<dbReference type="EC" id="3.1.1.61" evidence="1"/>
<dbReference type="EC" id="3.5.1.44" evidence="1"/>
<dbReference type="EMBL" id="CP000103">
    <property type="protein sequence ID" value="ABB73642.1"/>
    <property type="molecule type" value="Genomic_DNA"/>
</dbReference>
<dbReference type="RefSeq" id="WP_011379696.1">
    <property type="nucleotide sequence ID" value="NC_007614.1"/>
</dbReference>
<dbReference type="SMR" id="Q2YC79"/>
<dbReference type="STRING" id="323848.Nmul_A0334"/>
<dbReference type="KEGG" id="nmu:Nmul_A0334"/>
<dbReference type="eggNOG" id="COG2201">
    <property type="taxonomic scope" value="Bacteria"/>
</dbReference>
<dbReference type="HOGENOM" id="CLU_000445_51_0_4"/>
<dbReference type="OrthoDB" id="9793421at2"/>
<dbReference type="Proteomes" id="UP000002718">
    <property type="component" value="Chromosome"/>
</dbReference>
<dbReference type="GO" id="GO:0005737">
    <property type="term" value="C:cytoplasm"/>
    <property type="evidence" value="ECO:0007669"/>
    <property type="project" value="UniProtKB-SubCell"/>
</dbReference>
<dbReference type="GO" id="GO:0000156">
    <property type="term" value="F:phosphorelay response regulator activity"/>
    <property type="evidence" value="ECO:0007669"/>
    <property type="project" value="InterPro"/>
</dbReference>
<dbReference type="GO" id="GO:0008984">
    <property type="term" value="F:protein-glutamate methylesterase activity"/>
    <property type="evidence" value="ECO:0007669"/>
    <property type="project" value="UniProtKB-UniRule"/>
</dbReference>
<dbReference type="GO" id="GO:0050568">
    <property type="term" value="F:protein-glutamine glutaminase activity"/>
    <property type="evidence" value="ECO:0007669"/>
    <property type="project" value="UniProtKB-UniRule"/>
</dbReference>
<dbReference type="GO" id="GO:0006935">
    <property type="term" value="P:chemotaxis"/>
    <property type="evidence" value="ECO:0007669"/>
    <property type="project" value="UniProtKB-UniRule"/>
</dbReference>
<dbReference type="CDD" id="cd16432">
    <property type="entry name" value="CheB_Rec"/>
    <property type="match status" value="1"/>
</dbReference>
<dbReference type="CDD" id="cd17541">
    <property type="entry name" value="REC_CheB-like"/>
    <property type="match status" value="1"/>
</dbReference>
<dbReference type="Gene3D" id="3.40.50.2300">
    <property type="match status" value="1"/>
</dbReference>
<dbReference type="Gene3D" id="3.40.50.180">
    <property type="entry name" value="Methylesterase CheB, C-terminal domain"/>
    <property type="match status" value="1"/>
</dbReference>
<dbReference type="HAMAP" id="MF_00099">
    <property type="entry name" value="CheB_chemtxs"/>
    <property type="match status" value="1"/>
</dbReference>
<dbReference type="InterPro" id="IPR008248">
    <property type="entry name" value="CheB-like"/>
</dbReference>
<dbReference type="InterPro" id="IPR035909">
    <property type="entry name" value="CheB_C"/>
</dbReference>
<dbReference type="InterPro" id="IPR011006">
    <property type="entry name" value="CheY-like_superfamily"/>
</dbReference>
<dbReference type="InterPro" id="IPR000673">
    <property type="entry name" value="Sig_transdc_resp-reg_Me-estase"/>
</dbReference>
<dbReference type="InterPro" id="IPR001789">
    <property type="entry name" value="Sig_transdc_resp-reg_receiver"/>
</dbReference>
<dbReference type="NCBIfam" id="NF001965">
    <property type="entry name" value="PRK00742.1"/>
    <property type="match status" value="1"/>
</dbReference>
<dbReference type="NCBIfam" id="NF009206">
    <property type="entry name" value="PRK12555.1"/>
    <property type="match status" value="1"/>
</dbReference>
<dbReference type="PANTHER" id="PTHR42872">
    <property type="entry name" value="PROTEIN-GLUTAMATE METHYLESTERASE/PROTEIN-GLUTAMINE GLUTAMINASE"/>
    <property type="match status" value="1"/>
</dbReference>
<dbReference type="PANTHER" id="PTHR42872:SF6">
    <property type="entry name" value="PROTEIN-GLUTAMATE METHYLESTERASE_PROTEIN-GLUTAMINE GLUTAMINASE"/>
    <property type="match status" value="1"/>
</dbReference>
<dbReference type="Pfam" id="PF01339">
    <property type="entry name" value="CheB_methylest"/>
    <property type="match status" value="1"/>
</dbReference>
<dbReference type="Pfam" id="PF00072">
    <property type="entry name" value="Response_reg"/>
    <property type="match status" value="1"/>
</dbReference>
<dbReference type="PIRSF" id="PIRSF000876">
    <property type="entry name" value="RR_chemtxs_CheB"/>
    <property type="match status" value="1"/>
</dbReference>
<dbReference type="SMART" id="SM00448">
    <property type="entry name" value="REC"/>
    <property type="match status" value="1"/>
</dbReference>
<dbReference type="SUPFAM" id="SSF52172">
    <property type="entry name" value="CheY-like"/>
    <property type="match status" value="1"/>
</dbReference>
<dbReference type="SUPFAM" id="SSF52738">
    <property type="entry name" value="Methylesterase CheB, C-terminal domain"/>
    <property type="match status" value="1"/>
</dbReference>
<dbReference type="PROSITE" id="PS50122">
    <property type="entry name" value="CHEB"/>
    <property type="match status" value="1"/>
</dbReference>
<dbReference type="PROSITE" id="PS50110">
    <property type="entry name" value="RESPONSE_REGULATORY"/>
    <property type="match status" value="1"/>
</dbReference>
<accession>Q2YC79</accession>
<sequence>MINVLVVEDSPVVREFLIYILNSDPDITVIATAGDGEEAIDALRNHRPDVITMDIHMPKLNGVEATQLIMETQPTPIVIVSGSTDPAEVGTTFDAIDAGALAVLPRPAGIGHPDHEATARKMIEVVKLMSEVKVVRRWARMRGASPASHSVRAPLLNRVAPARIVVVGASTGGPPALEAILSSLPKHFPVPILIVQHMTTGFMEGFVQWLKNSSNLPVHIARQGELPLPGHVYMAPDEYQMKVENRGEIVLTKDEPEHGSRPSISYLFRAVARVYGHDAVAGLLTGMGRDGADELRLLKEKGAITFAQDKESSVVHGMAGEAIRLGAATMVLPLEKIAAALTNLVAERGETKLGA</sequence>
<proteinExistence type="inferred from homology"/>
<comment type="function">
    <text evidence="1">Involved in chemotaxis. Part of a chemotaxis signal transduction system that modulates chemotaxis in response to various stimuli. Catalyzes the demethylation of specific methylglutamate residues introduced into the chemoreceptors (methyl-accepting chemotaxis proteins or MCP) by CheR. Also mediates the irreversible deamidation of specific glutamine residues to glutamic acid.</text>
</comment>
<comment type="catalytic activity">
    <reaction evidence="1">
        <text>[protein]-L-glutamate 5-O-methyl ester + H2O = L-glutamyl-[protein] + methanol + H(+)</text>
        <dbReference type="Rhea" id="RHEA:23236"/>
        <dbReference type="Rhea" id="RHEA-COMP:10208"/>
        <dbReference type="Rhea" id="RHEA-COMP:10311"/>
        <dbReference type="ChEBI" id="CHEBI:15377"/>
        <dbReference type="ChEBI" id="CHEBI:15378"/>
        <dbReference type="ChEBI" id="CHEBI:17790"/>
        <dbReference type="ChEBI" id="CHEBI:29973"/>
        <dbReference type="ChEBI" id="CHEBI:82795"/>
        <dbReference type="EC" id="3.1.1.61"/>
    </reaction>
</comment>
<comment type="catalytic activity">
    <reaction evidence="1">
        <text>L-glutaminyl-[protein] + H2O = L-glutamyl-[protein] + NH4(+)</text>
        <dbReference type="Rhea" id="RHEA:16441"/>
        <dbReference type="Rhea" id="RHEA-COMP:10207"/>
        <dbReference type="Rhea" id="RHEA-COMP:10208"/>
        <dbReference type="ChEBI" id="CHEBI:15377"/>
        <dbReference type="ChEBI" id="CHEBI:28938"/>
        <dbReference type="ChEBI" id="CHEBI:29973"/>
        <dbReference type="ChEBI" id="CHEBI:30011"/>
        <dbReference type="EC" id="3.5.1.44"/>
    </reaction>
</comment>
<comment type="subcellular location">
    <subcellularLocation>
        <location evidence="1">Cytoplasm</location>
    </subcellularLocation>
</comment>
<comment type="domain">
    <text evidence="1">Contains a C-terminal catalytic domain, and an N-terminal region which modulates catalytic activity.</text>
</comment>
<comment type="PTM">
    <text evidence="1">Phosphorylated by CheA. Phosphorylation of the N-terminal regulatory domain activates the methylesterase activity.</text>
</comment>
<comment type="similarity">
    <text evidence="1">Belongs to the CheB family.</text>
</comment>
<protein>
    <recommendedName>
        <fullName evidence="1">Protein-glutamate methylesterase/protein-glutamine glutaminase</fullName>
        <ecNumber evidence="1">3.1.1.61</ecNumber>
        <ecNumber evidence="1">3.5.1.44</ecNumber>
    </recommendedName>
</protein>
<feature type="chain" id="PRO_0000264298" description="Protein-glutamate methylesterase/protein-glutamine glutaminase">
    <location>
        <begin position="1"/>
        <end position="355"/>
    </location>
</feature>
<feature type="domain" description="Response regulatory" evidence="1">
    <location>
        <begin position="3"/>
        <end position="121"/>
    </location>
</feature>
<feature type="domain" description="CheB-type methylesterase" evidence="1">
    <location>
        <begin position="154"/>
        <end position="348"/>
    </location>
</feature>
<feature type="active site" evidence="1">
    <location>
        <position position="170"/>
    </location>
</feature>
<feature type="active site" evidence="1">
    <location>
        <position position="197"/>
    </location>
</feature>
<feature type="active site" evidence="1">
    <location>
        <position position="290"/>
    </location>
</feature>
<feature type="modified residue" description="4-aspartylphosphate" evidence="1">
    <location>
        <position position="54"/>
    </location>
</feature>
<gene>
    <name evidence="1" type="primary">cheB</name>
    <name type="ordered locus">Nmul_A0334</name>
</gene>
<reference key="1">
    <citation type="submission" date="2005-08" db="EMBL/GenBank/DDBJ databases">
        <title>Complete sequence of chromosome 1 of Nitrosospira multiformis ATCC 25196.</title>
        <authorList>
            <person name="Copeland A."/>
            <person name="Lucas S."/>
            <person name="Lapidus A."/>
            <person name="Barry K."/>
            <person name="Detter J.C."/>
            <person name="Glavina T."/>
            <person name="Hammon N."/>
            <person name="Israni S."/>
            <person name="Pitluck S."/>
            <person name="Chain P."/>
            <person name="Malfatti S."/>
            <person name="Shin M."/>
            <person name="Vergez L."/>
            <person name="Schmutz J."/>
            <person name="Larimer F."/>
            <person name="Land M."/>
            <person name="Hauser L."/>
            <person name="Kyrpides N."/>
            <person name="Lykidis A."/>
            <person name="Richardson P."/>
        </authorList>
    </citation>
    <scope>NUCLEOTIDE SEQUENCE [LARGE SCALE GENOMIC DNA]</scope>
    <source>
        <strain>ATCC 25196 / NCIMB 11849 / C 71</strain>
    </source>
</reference>